<organism>
    <name type="scientific">Mus musculus</name>
    <name type="common">Mouse</name>
    <dbReference type="NCBI Taxonomy" id="10090"/>
    <lineage>
        <taxon>Eukaryota</taxon>
        <taxon>Metazoa</taxon>
        <taxon>Chordata</taxon>
        <taxon>Craniata</taxon>
        <taxon>Vertebrata</taxon>
        <taxon>Euteleostomi</taxon>
        <taxon>Mammalia</taxon>
        <taxon>Eutheria</taxon>
        <taxon>Euarchontoglires</taxon>
        <taxon>Glires</taxon>
        <taxon>Rodentia</taxon>
        <taxon>Myomorpha</taxon>
        <taxon>Muroidea</taxon>
        <taxon>Muridae</taxon>
        <taxon>Murinae</taxon>
        <taxon>Mus</taxon>
        <taxon>Mus</taxon>
    </lineage>
</organism>
<sequence length="264" mass="28532">MALASVLQRPMPVNQHGFFGLGGGADLLDLGPGSPGDGLSLAAPSWGVPEEPRIEMLHGTTTLAFKFLHGVIVAADSRATAGAYIASQTVKKVIEINPYLLGTMAGGAADCSFWERLLARQCRIYELRNKERISVAAASKLLANMVYQYKGMGLSMGTMICGWDKRGPGLYYVDSEGNRISGTAFSVGSGSVYAYGVMDRGYSYDLKVEEAYDLARRAIYQATYRDAYSGGAVNLYHVREDGWIRVSSDNVADLHDKYSSVSVP</sequence>
<accession>O55234</accession>
<accession>Q3UZI1</accession>
<accession>Q91X53</accession>
<accession>Q9CWR4</accession>
<accession>Q9R1P2</accession>
<comment type="function">
    <text evidence="6 11 12">Component of the 20S core proteasome complex involved in the proteolytic degradation of most intracellular proteins. This complex plays numerous essential roles within the cell by associating with different regulatory particles. Associated with two 19S regulatory particles, forms the 26S proteasome and thus participates in the ATP-dependent degradation of ubiquitinated proteins. The 26S proteasome plays a key role in the maintenance of protein homeostasis by removing misfolded or damaged proteins that could impair cellular functions, and by removing proteins whose functions are no longer required. Associated with the PA200 or PA28, the 20S proteasome mediates ubiquitin-independent protein degradation. This type of proteolysis is required in several pathways including spermatogenesis (20S-PA200 complex) or generation of a subset of MHC class I-presented antigenic peptides (20S-PA28 complex). Within the 20S core complex, PSMB5 displays a chymotrypsin-like activity.</text>
</comment>
<comment type="catalytic activity">
    <reaction evidence="2">
        <text>Cleavage of peptide bonds with very broad specificity.</text>
        <dbReference type="EC" id="3.4.25.1"/>
    </reaction>
</comment>
<comment type="subunit">
    <text evidence="2 8 12">The 26S proteasome consists of a 20S proteasome core and two 19S regulatory subunits. The 20S proteasome core is a barrel-shaped complex made of 28 subunits that are arranged in four stacked rings. The two outer rings are each formed by seven alpha subunits, and the two inner rings are formed by seven beta subunits. The proteolytic activity is exerted by three beta-subunits PSMB5, PSMB6 and PSMB7 (PubMed:16857966, PubMed:22341445). Directly interacts with POMP (By similarity). Interacts with ABCB1 and TAP1 (By similarity).</text>
</comment>
<comment type="subcellular location">
    <subcellularLocation>
        <location evidence="2">Cytoplasm</location>
    </subcellularLocation>
    <subcellularLocation>
        <location evidence="2">Nucleus</location>
    </subcellularLocation>
    <text evidence="2">Translocated from the cytoplasm into the nucleus following interaction with AKIRIN2, which bridges the proteasome with the nuclear import receptor IPO9.</text>
</comment>
<comment type="tissue specificity">
    <text evidence="5 12">Expressed in uterus at the embryo implantation site.</text>
</comment>
<comment type="induction">
    <text evidence="4 7 9 10">Up-regulated in embryonic fibroblasts and neuroblastoma cells by antioxidants through the Nrf2-ARE pathway (at protein level). Up-regulated by the antioxidant dithiolethione (D3T) in liver, small intestine and brain (at protein level). Down-regulated under lithium treatment.</text>
</comment>
<comment type="similarity">
    <text evidence="3">Belongs to the peptidase T1B family.</text>
</comment>
<feature type="propeptide" id="PRO_0000026591" description="Removed in mature form" evidence="1">
    <location>
        <begin position="1"/>
        <end position="59"/>
    </location>
</feature>
<feature type="chain" id="PRO_0000026592" description="Proteasome subunit beta type-5">
    <location>
        <begin position="60"/>
        <end position="264"/>
    </location>
</feature>
<feature type="active site" description="Nucleophile" evidence="2">
    <location>
        <position position="60"/>
    </location>
</feature>
<feature type="binding site" evidence="1">
    <location>
        <position position="108"/>
    </location>
    <ligand>
        <name>bortezomib</name>
        <dbReference type="ChEBI" id="CHEBI:52717"/>
    </ligand>
</feature>
<feature type="sequence conflict" description="In Ref. 3; BAB26942." evidence="13" ref="3">
    <original>D</original>
    <variation>N</variation>
    <location>
        <position position="110"/>
    </location>
</feature>
<feature type="sequence conflict" description="In Ref. 4; AAH12246." evidence="13" ref="4">
    <original>S</original>
    <variation>N</variation>
    <location>
        <position position="248"/>
    </location>
</feature>
<feature type="strand" evidence="14">
    <location>
        <begin position="61"/>
        <end position="67"/>
    </location>
</feature>
<feature type="strand" evidence="14">
    <location>
        <begin position="70"/>
        <end position="75"/>
    </location>
</feature>
<feature type="strand" evidence="14">
    <location>
        <begin position="79"/>
        <end position="81"/>
    </location>
</feature>
<feature type="strand" evidence="14">
    <location>
        <begin position="84"/>
        <end position="88"/>
    </location>
</feature>
<feature type="strand" evidence="14">
    <location>
        <begin position="93"/>
        <end position="97"/>
    </location>
</feature>
<feature type="strand" evidence="14">
    <location>
        <begin position="100"/>
        <end position="103"/>
    </location>
</feature>
<feature type="helix" evidence="14">
    <location>
        <begin position="108"/>
        <end position="129"/>
    </location>
</feature>
<feature type="helix" evidence="14">
    <location>
        <begin position="135"/>
        <end position="147"/>
    </location>
</feature>
<feature type="turn" evidence="14">
    <location>
        <begin position="148"/>
        <end position="153"/>
    </location>
</feature>
<feature type="strand" evidence="14">
    <location>
        <begin position="156"/>
        <end position="164"/>
    </location>
</feature>
<feature type="strand" evidence="14">
    <location>
        <begin position="167"/>
        <end position="174"/>
    </location>
</feature>
<feature type="strand" evidence="14">
    <location>
        <begin position="179"/>
        <end position="181"/>
    </location>
</feature>
<feature type="strand" evidence="14">
    <location>
        <begin position="183"/>
        <end position="188"/>
    </location>
</feature>
<feature type="helix" evidence="14">
    <location>
        <begin position="191"/>
        <end position="200"/>
    </location>
</feature>
<feature type="helix" evidence="14">
    <location>
        <begin position="208"/>
        <end position="225"/>
    </location>
</feature>
<feature type="strand" evidence="15">
    <location>
        <begin position="226"/>
        <end position="228"/>
    </location>
</feature>
<feature type="strand" evidence="14">
    <location>
        <begin position="231"/>
        <end position="239"/>
    </location>
</feature>
<feature type="strand" evidence="14">
    <location>
        <begin position="242"/>
        <end position="250"/>
    </location>
</feature>
<feature type="helix" evidence="14">
    <location>
        <begin position="251"/>
        <end position="258"/>
    </location>
</feature>
<dbReference type="EC" id="3.4.25.1" evidence="2"/>
<dbReference type="EMBL" id="AB003304">
    <property type="protein sequence ID" value="BAA24916.1"/>
    <property type="molecule type" value="mRNA"/>
</dbReference>
<dbReference type="EMBL" id="AB003306">
    <property type="protein sequence ID" value="BAA24917.1"/>
    <property type="molecule type" value="Genomic_DNA"/>
</dbReference>
<dbReference type="EMBL" id="AF060091">
    <property type="protein sequence ID" value="AAD50536.1"/>
    <property type="molecule type" value="mRNA"/>
</dbReference>
<dbReference type="EMBL" id="AK010441">
    <property type="protein sequence ID" value="BAB26942.1"/>
    <property type="molecule type" value="mRNA"/>
</dbReference>
<dbReference type="EMBL" id="AK133839">
    <property type="protein sequence ID" value="BAE21876.1"/>
    <property type="molecule type" value="mRNA"/>
</dbReference>
<dbReference type="EMBL" id="BC012246">
    <property type="protein sequence ID" value="AAH12246.1"/>
    <property type="molecule type" value="mRNA"/>
</dbReference>
<dbReference type="EMBL" id="BC106144">
    <property type="protein sequence ID" value="AAI06145.1"/>
    <property type="molecule type" value="mRNA"/>
</dbReference>
<dbReference type="CCDS" id="CCDS27095.1"/>
<dbReference type="RefSeq" id="NP_035316.1">
    <property type="nucleotide sequence ID" value="NM_011186.1"/>
</dbReference>
<dbReference type="PDB" id="3UNB">
    <property type="method" value="X-ray"/>
    <property type="resolution" value="2.90 A"/>
    <property type="chains" value="1/K/Y/m=60-264"/>
</dbReference>
<dbReference type="PDB" id="3UNE">
    <property type="method" value="X-ray"/>
    <property type="resolution" value="3.20 A"/>
    <property type="chains" value="1/K/Y/m=60-264"/>
</dbReference>
<dbReference type="PDB" id="8YPK">
    <property type="method" value="EM"/>
    <property type="resolution" value="2.70 A"/>
    <property type="chains" value="C/D=61-264"/>
</dbReference>
<dbReference type="PDB" id="8YVP">
    <property type="method" value="EM"/>
    <property type="resolution" value="2.50 A"/>
    <property type="chains" value="C/D=61-264"/>
</dbReference>
<dbReference type="PDBsum" id="3UNB"/>
<dbReference type="PDBsum" id="3UNE"/>
<dbReference type="PDBsum" id="8YPK"/>
<dbReference type="PDBsum" id="8YVP"/>
<dbReference type="EMDB" id="EMD-39482"/>
<dbReference type="EMDB" id="EMD-39612"/>
<dbReference type="SMR" id="O55234"/>
<dbReference type="BioGRID" id="202421">
    <property type="interactions" value="109"/>
</dbReference>
<dbReference type="CORUM" id="O55234"/>
<dbReference type="FunCoup" id="O55234">
    <property type="interactions" value="1772"/>
</dbReference>
<dbReference type="IntAct" id="O55234">
    <property type="interactions" value="67"/>
</dbReference>
<dbReference type="STRING" id="10090.ENSMUSP00000022803"/>
<dbReference type="BindingDB" id="O55234"/>
<dbReference type="ChEMBL" id="CHEMBL1944494"/>
<dbReference type="MEROPS" id="T01.012"/>
<dbReference type="GlyGen" id="O55234">
    <property type="glycosylation" value="1 site, 1 O-linked glycan (1 site)"/>
</dbReference>
<dbReference type="iPTMnet" id="O55234"/>
<dbReference type="MetOSite" id="O55234"/>
<dbReference type="PhosphoSitePlus" id="O55234"/>
<dbReference type="SwissPalm" id="O55234"/>
<dbReference type="jPOST" id="O55234"/>
<dbReference type="PaxDb" id="10090-ENSMUSP00000022803"/>
<dbReference type="PeptideAtlas" id="O55234"/>
<dbReference type="ProteomicsDB" id="291762"/>
<dbReference type="Pumba" id="O55234"/>
<dbReference type="Antibodypedia" id="22368">
    <property type="antibodies" value="249 antibodies from 35 providers"/>
</dbReference>
<dbReference type="DNASU" id="19173"/>
<dbReference type="Ensembl" id="ENSMUST00000022803.6">
    <property type="protein sequence ID" value="ENSMUSP00000022803.5"/>
    <property type="gene ID" value="ENSMUSG00000022193.8"/>
</dbReference>
<dbReference type="GeneID" id="19173"/>
<dbReference type="KEGG" id="mmu:19173"/>
<dbReference type="UCSC" id="uc007twl.1">
    <property type="organism name" value="mouse"/>
</dbReference>
<dbReference type="AGR" id="MGI:1194513"/>
<dbReference type="CTD" id="5693"/>
<dbReference type="MGI" id="MGI:1194513">
    <property type="gene designation" value="Psmb5"/>
</dbReference>
<dbReference type="VEuPathDB" id="HostDB:ENSMUSG00000022193"/>
<dbReference type="eggNOG" id="KOG0175">
    <property type="taxonomic scope" value="Eukaryota"/>
</dbReference>
<dbReference type="GeneTree" id="ENSGT00940000157841"/>
<dbReference type="HOGENOM" id="CLU_035750_7_3_1"/>
<dbReference type="InParanoid" id="O55234"/>
<dbReference type="OMA" id="NLGMAMQ"/>
<dbReference type="OrthoDB" id="37597at2759"/>
<dbReference type="PhylomeDB" id="O55234"/>
<dbReference type="TreeFam" id="TF106223"/>
<dbReference type="Reactome" id="R-MMU-1169091">
    <property type="pathway name" value="Activation of NF-kappaB in B cells"/>
</dbReference>
<dbReference type="Reactome" id="R-MMU-1234176">
    <property type="pathway name" value="Oxygen-dependent proline hydroxylation of Hypoxia-inducible Factor Alpha"/>
</dbReference>
<dbReference type="Reactome" id="R-MMU-1236978">
    <property type="pathway name" value="Cross-presentation of soluble exogenous antigens (endosomes)"/>
</dbReference>
<dbReference type="Reactome" id="R-MMU-174084">
    <property type="pathway name" value="Autodegradation of Cdh1 by Cdh1:APC/C"/>
</dbReference>
<dbReference type="Reactome" id="R-MMU-174154">
    <property type="pathway name" value="APC/C:Cdc20 mediated degradation of Securin"/>
</dbReference>
<dbReference type="Reactome" id="R-MMU-174178">
    <property type="pathway name" value="APC/C:Cdh1 mediated degradation of Cdc20 and other APC/C:Cdh1 targeted proteins in late mitosis/early G1"/>
</dbReference>
<dbReference type="Reactome" id="R-MMU-174184">
    <property type="pathway name" value="Cdc20:Phospho-APC/C mediated degradation of Cyclin A"/>
</dbReference>
<dbReference type="Reactome" id="R-MMU-187577">
    <property type="pathway name" value="SCF(Skp2)-mediated degradation of p27/p21"/>
</dbReference>
<dbReference type="Reactome" id="R-MMU-195253">
    <property type="pathway name" value="Degradation of beta-catenin by the destruction complex"/>
</dbReference>
<dbReference type="Reactome" id="R-MMU-202424">
    <property type="pathway name" value="Downstream TCR signaling"/>
</dbReference>
<dbReference type="Reactome" id="R-MMU-2467813">
    <property type="pathway name" value="Separation of Sister Chromatids"/>
</dbReference>
<dbReference type="Reactome" id="R-MMU-2871837">
    <property type="pathway name" value="FCERI mediated NF-kB activation"/>
</dbReference>
<dbReference type="Reactome" id="R-MMU-349425">
    <property type="pathway name" value="Autodegradation of the E3 ubiquitin ligase COP1"/>
</dbReference>
<dbReference type="Reactome" id="R-MMU-350562">
    <property type="pathway name" value="Regulation of ornithine decarboxylase (ODC)"/>
</dbReference>
<dbReference type="Reactome" id="R-MMU-382556">
    <property type="pathway name" value="ABC-family proteins mediated transport"/>
</dbReference>
<dbReference type="Reactome" id="R-MMU-450408">
    <property type="pathway name" value="AUF1 (hnRNP D0) binds and destabilizes mRNA"/>
</dbReference>
<dbReference type="Reactome" id="R-MMU-4608870">
    <property type="pathway name" value="Asymmetric localization of PCP proteins"/>
</dbReference>
<dbReference type="Reactome" id="R-MMU-4641257">
    <property type="pathway name" value="Degradation of AXIN"/>
</dbReference>
<dbReference type="Reactome" id="R-MMU-4641258">
    <property type="pathway name" value="Degradation of DVL"/>
</dbReference>
<dbReference type="Reactome" id="R-MMU-5358346">
    <property type="pathway name" value="Hedgehog ligand biogenesis"/>
</dbReference>
<dbReference type="Reactome" id="R-MMU-5607761">
    <property type="pathway name" value="Dectin-1 mediated noncanonical NF-kB signaling"/>
</dbReference>
<dbReference type="Reactome" id="R-MMU-5607764">
    <property type="pathway name" value="CLEC7A (Dectin-1) signaling"/>
</dbReference>
<dbReference type="Reactome" id="R-MMU-5610780">
    <property type="pathway name" value="Degradation of GLI1 by the proteasome"/>
</dbReference>
<dbReference type="Reactome" id="R-MMU-5610785">
    <property type="pathway name" value="GLI3 is processed to GLI3R by the proteasome"/>
</dbReference>
<dbReference type="Reactome" id="R-MMU-5632684">
    <property type="pathway name" value="Hedgehog 'on' state"/>
</dbReference>
<dbReference type="Reactome" id="R-MMU-5658442">
    <property type="pathway name" value="Regulation of RAS by GAPs"/>
</dbReference>
<dbReference type="Reactome" id="R-MMU-5668541">
    <property type="pathway name" value="TNFR2 non-canonical NF-kB pathway"/>
</dbReference>
<dbReference type="Reactome" id="R-MMU-5676590">
    <property type="pathway name" value="NIK--&gt;noncanonical NF-kB signaling"/>
</dbReference>
<dbReference type="Reactome" id="R-MMU-5687128">
    <property type="pathway name" value="MAPK6/MAPK4 signaling"/>
</dbReference>
<dbReference type="Reactome" id="R-MMU-5689603">
    <property type="pathway name" value="UCH proteinases"/>
</dbReference>
<dbReference type="Reactome" id="R-MMU-5689880">
    <property type="pathway name" value="Ub-specific processing proteases"/>
</dbReference>
<dbReference type="Reactome" id="R-MMU-68867">
    <property type="pathway name" value="Assembly of the pre-replicative complex"/>
</dbReference>
<dbReference type="Reactome" id="R-MMU-68949">
    <property type="pathway name" value="Orc1 removal from chromatin"/>
</dbReference>
<dbReference type="Reactome" id="R-MMU-69017">
    <property type="pathway name" value="CDK-mediated phosphorylation and removal of Cdc6"/>
</dbReference>
<dbReference type="Reactome" id="R-MMU-69481">
    <property type="pathway name" value="G2/M Checkpoints"/>
</dbReference>
<dbReference type="Reactome" id="R-MMU-69601">
    <property type="pathway name" value="Ubiquitin Mediated Degradation of Phosphorylated Cdc25A"/>
</dbReference>
<dbReference type="Reactome" id="R-MMU-75815">
    <property type="pathway name" value="Ubiquitin-dependent degradation of Cyclin D"/>
</dbReference>
<dbReference type="Reactome" id="R-MMU-8852276">
    <property type="pathway name" value="The role of GTSE1 in G2/M progression after G2 checkpoint"/>
</dbReference>
<dbReference type="Reactome" id="R-MMU-8854050">
    <property type="pathway name" value="FBXL7 down-regulates AURKA during mitotic entry and in early mitosis"/>
</dbReference>
<dbReference type="Reactome" id="R-MMU-8939236">
    <property type="pathway name" value="RUNX1 regulates transcription of genes involved in differentiation of HSCs"/>
</dbReference>
<dbReference type="Reactome" id="R-MMU-8939902">
    <property type="pathway name" value="Regulation of RUNX2 expression and activity"/>
</dbReference>
<dbReference type="Reactome" id="R-MMU-8941858">
    <property type="pathway name" value="Regulation of RUNX3 expression and activity"/>
</dbReference>
<dbReference type="Reactome" id="R-MMU-8948751">
    <property type="pathway name" value="Regulation of PTEN stability and activity"/>
</dbReference>
<dbReference type="Reactome" id="R-MMU-8951664">
    <property type="pathway name" value="Neddylation"/>
</dbReference>
<dbReference type="Reactome" id="R-MMU-9020702">
    <property type="pathway name" value="Interleukin-1 signaling"/>
</dbReference>
<dbReference type="Reactome" id="R-MMU-9755511">
    <property type="pathway name" value="KEAP1-NFE2L2 pathway"/>
</dbReference>
<dbReference type="Reactome" id="R-MMU-9762114">
    <property type="pathway name" value="GSK3B and BTRC:CUL1-mediated-degradation of NFE2L2"/>
</dbReference>
<dbReference type="Reactome" id="R-MMU-983168">
    <property type="pathway name" value="Antigen processing: Ubiquitination &amp; Proteasome degradation"/>
</dbReference>
<dbReference type="Reactome" id="R-MMU-9907900">
    <property type="pathway name" value="Proteasome assembly"/>
</dbReference>
<dbReference type="BioGRID-ORCS" id="19173">
    <property type="hits" value="22 hits in 73 CRISPR screens"/>
</dbReference>
<dbReference type="ChiTaRS" id="Psmb5">
    <property type="organism name" value="mouse"/>
</dbReference>
<dbReference type="EvolutionaryTrace" id="O55234"/>
<dbReference type="PRO" id="PR:O55234"/>
<dbReference type="Proteomes" id="UP000000589">
    <property type="component" value="Chromosome 14"/>
</dbReference>
<dbReference type="RNAct" id="O55234">
    <property type="molecule type" value="protein"/>
</dbReference>
<dbReference type="Bgee" id="ENSMUSG00000022193">
    <property type="expression patterns" value="Expressed in proximal tubule and 69 other cell types or tissues"/>
</dbReference>
<dbReference type="ExpressionAtlas" id="O55234">
    <property type="expression patterns" value="baseline and differential"/>
</dbReference>
<dbReference type="GO" id="GO:0005813">
    <property type="term" value="C:centrosome"/>
    <property type="evidence" value="ECO:0007669"/>
    <property type="project" value="Ensembl"/>
</dbReference>
<dbReference type="GO" id="GO:0005829">
    <property type="term" value="C:cytosol"/>
    <property type="evidence" value="ECO:0000304"/>
    <property type="project" value="Reactome"/>
</dbReference>
<dbReference type="GO" id="GO:0005654">
    <property type="term" value="C:nucleoplasm"/>
    <property type="evidence" value="ECO:0000304"/>
    <property type="project" value="Reactome"/>
</dbReference>
<dbReference type="GO" id="GO:0005839">
    <property type="term" value="C:proteasome core complex"/>
    <property type="evidence" value="ECO:0000314"/>
    <property type="project" value="UniProtKB"/>
</dbReference>
<dbReference type="GO" id="GO:0019774">
    <property type="term" value="C:proteasome core complex, beta-subunit complex"/>
    <property type="evidence" value="ECO:0000250"/>
    <property type="project" value="UniProtKB"/>
</dbReference>
<dbReference type="GO" id="GO:0008233">
    <property type="term" value="F:peptidase activity"/>
    <property type="evidence" value="ECO:0000314"/>
    <property type="project" value="MGI"/>
</dbReference>
<dbReference type="GO" id="GO:0004298">
    <property type="term" value="F:threonine-type endopeptidase activity"/>
    <property type="evidence" value="ECO:0007669"/>
    <property type="project" value="UniProtKB-KW"/>
</dbReference>
<dbReference type="GO" id="GO:0043161">
    <property type="term" value="P:proteasome-mediated ubiquitin-dependent protein catabolic process"/>
    <property type="evidence" value="ECO:0000314"/>
    <property type="project" value="MGI"/>
</dbReference>
<dbReference type="GO" id="GO:0006508">
    <property type="term" value="P:proteolysis"/>
    <property type="evidence" value="ECO:0000266"/>
    <property type="project" value="MGI"/>
</dbReference>
<dbReference type="GO" id="GO:0006979">
    <property type="term" value="P:response to oxidative stress"/>
    <property type="evidence" value="ECO:0000314"/>
    <property type="project" value="MGI"/>
</dbReference>
<dbReference type="CDD" id="cd03761">
    <property type="entry name" value="proteasome_beta_type_5"/>
    <property type="match status" value="1"/>
</dbReference>
<dbReference type="FunFam" id="3.60.20.10:FF:000030">
    <property type="entry name" value="Proteasome subunit beta"/>
    <property type="match status" value="1"/>
</dbReference>
<dbReference type="Gene3D" id="3.60.20.10">
    <property type="entry name" value="Glutamine Phosphoribosylpyrophosphate, subunit 1, domain 1"/>
    <property type="match status" value="1"/>
</dbReference>
<dbReference type="InterPro" id="IPR029055">
    <property type="entry name" value="Ntn_hydrolases_N"/>
</dbReference>
<dbReference type="InterPro" id="IPR000243">
    <property type="entry name" value="Pept_T1A_subB"/>
</dbReference>
<dbReference type="InterPro" id="IPR016050">
    <property type="entry name" value="Proteasome_bsu_CS"/>
</dbReference>
<dbReference type="InterPro" id="IPR001353">
    <property type="entry name" value="Proteasome_sua/b"/>
</dbReference>
<dbReference type="InterPro" id="IPR023333">
    <property type="entry name" value="Proteasome_suB-type"/>
</dbReference>
<dbReference type="PANTHER" id="PTHR32194">
    <property type="entry name" value="METALLOPROTEASE TLDD"/>
    <property type="match status" value="1"/>
</dbReference>
<dbReference type="PANTHER" id="PTHR32194:SF11">
    <property type="entry name" value="PROTEASOME SUBUNIT BETA"/>
    <property type="match status" value="1"/>
</dbReference>
<dbReference type="Pfam" id="PF00227">
    <property type="entry name" value="Proteasome"/>
    <property type="match status" value="1"/>
</dbReference>
<dbReference type="PRINTS" id="PR00141">
    <property type="entry name" value="PROTEASOME"/>
</dbReference>
<dbReference type="SUPFAM" id="SSF56235">
    <property type="entry name" value="N-terminal nucleophile aminohydrolases (Ntn hydrolases)"/>
    <property type="match status" value="1"/>
</dbReference>
<dbReference type="PROSITE" id="PS00854">
    <property type="entry name" value="PROTEASOME_BETA_1"/>
    <property type="match status" value="1"/>
</dbReference>
<dbReference type="PROSITE" id="PS51476">
    <property type="entry name" value="PROTEASOME_BETA_2"/>
    <property type="match status" value="1"/>
</dbReference>
<gene>
    <name type="primary">Psmb5</name>
</gene>
<protein>
    <recommendedName>
        <fullName>Proteasome subunit beta type-5</fullName>
        <ecNumber evidence="2">3.4.25.1</ecNumber>
    </recommendedName>
    <alternativeName>
        <fullName>Macropain epsilon chain</fullName>
    </alternativeName>
    <alternativeName>
        <fullName>Multicatalytic endopeptidase complex epsilon chain</fullName>
    </alternativeName>
    <alternativeName>
        <fullName>Proteasome chain 6</fullName>
    </alternativeName>
    <alternativeName>
        <fullName>Proteasome epsilon chain</fullName>
    </alternativeName>
    <alternativeName>
        <fullName>Proteasome subunit X</fullName>
    </alternativeName>
    <alternativeName>
        <fullName>Proteasome subunit beta-5</fullName>
        <shortName>beta-5</shortName>
    </alternativeName>
</protein>
<keyword id="KW-0002">3D-structure</keyword>
<keyword id="KW-0963">Cytoplasm</keyword>
<keyword id="KW-0903">Direct protein sequencing</keyword>
<keyword id="KW-0378">Hydrolase</keyword>
<keyword id="KW-0539">Nucleus</keyword>
<keyword id="KW-0645">Protease</keyword>
<keyword id="KW-0647">Proteasome</keyword>
<keyword id="KW-1185">Reference proteome</keyword>
<keyword id="KW-0888">Threonine protease</keyword>
<keyword id="KW-0865">Zymogen</keyword>
<name>PSB5_MOUSE</name>
<evidence type="ECO:0000250" key="1"/>
<evidence type="ECO:0000250" key="2">
    <source>
        <dbReference type="UniProtKB" id="P28074"/>
    </source>
</evidence>
<evidence type="ECO:0000255" key="3">
    <source>
        <dbReference type="PROSITE-ProRule" id="PRU00809"/>
    </source>
</evidence>
<evidence type="ECO:0000269" key="4">
    <source>
    </source>
</evidence>
<evidence type="ECO:0000269" key="5">
    <source>
    </source>
</evidence>
<evidence type="ECO:0000269" key="6">
    <source>
    </source>
</evidence>
<evidence type="ECO:0000269" key="7">
    <source>
    </source>
</evidence>
<evidence type="ECO:0000269" key="8">
    <source>
    </source>
</evidence>
<evidence type="ECO:0000269" key="9">
    <source>
    </source>
</evidence>
<evidence type="ECO:0000269" key="10">
    <source>
    </source>
</evidence>
<evidence type="ECO:0000269" key="11">
    <source>
    </source>
</evidence>
<evidence type="ECO:0000269" key="12">
    <source>
    </source>
</evidence>
<evidence type="ECO:0000305" key="13"/>
<evidence type="ECO:0007829" key="14">
    <source>
        <dbReference type="PDB" id="3UNB"/>
    </source>
</evidence>
<evidence type="ECO:0007829" key="15">
    <source>
        <dbReference type="PDB" id="3UNE"/>
    </source>
</evidence>
<proteinExistence type="evidence at protein level"/>
<reference key="1">
    <citation type="journal article" date="1997" name="Immunogenetics">
        <title>Structural analysis and chromosomal localization of the mouse Psmb5 gene coding for the constitutively expressed beta-type proteasome subunit.</title>
        <authorList>
            <person name="Kohda K."/>
            <person name="Matsuda Y."/>
            <person name="Ishibashi T."/>
            <person name="Tanaka K."/>
            <person name="Kasahara M."/>
        </authorList>
    </citation>
    <scope>NUCLEOTIDE SEQUENCE [GENOMIC DNA / MRNA]</scope>
    <source>
        <strain>129/SvJ</strain>
        <strain>C57BL/6J</strain>
    </source>
</reference>
<reference key="2">
    <citation type="journal article" date="1999" name="Immunogenetics">
        <title>The complete primary structure of mouse 20S proteasomes.</title>
        <authorList>
            <person name="Elenich L.A."/>
            <person name="Nandi D."/>
            <person name="Kent E.A."/>
            <person name="McCluskey T.S."/>
            <person name="Cruz M."/>
            <person name="Iyer M.N."/>
            <person name="Woodward E.C."/>
            <person name="Conn C.W."/>
            <person name="Ochoa A.L."/>
            <person name="Ginsburg D.B."/>
            <person name="Monaco J.J."/>
        </authorList>
    </citation>
    <scope>NUCLEOTIDE SEQUENCE [MRNA]</scope>
    <source>
        <strain>B10.A</strain>
        <tissue>Macrophage</tissue>
    </source>
</reference>
<reference key="3">
    <citation type="journal article" date="2005" name="Science">
        <title>The transcriptional landscape of the mammalian genome.</title>
        <authorList>
            <person name="Carninci P."/>
            <person name="Kasukawa T."/>
            <person name="Katayama S."/>
            <person name="Gough J."/>
            <person name="Frith M.C."/>
            <person name="Maeda N."/>
            <person name="Oyama R."/>
            <person name="Ravasi T."/>
            <person name="Lenhard B."/>
            <person name="Wells C."/>
            <person name="Kodzius R."/>
            <person name="Shimokawa K."/>
            <person name="Bajic V.B."/>
            <person name="Brenner S.E."/>
            <person name="Batalov S."/>
            <person name="Forrest A.R."/>
            <person name="Zavolan M."/>
            <person name="Davis M.J."/>
            <person name="Wilming L.G."/>
            <person name="Aidinis V."/>
            <person name="Allen J.E."/>
            <person name="Ambesi-Impiombato A."/>
            <person name="Apweiler R."/>
            <person name="Aturaliya R.N."/>
            <person name="Bailey T.L."/>
            <person name="Bansal M."/>
            <person name="Baxter L."/>
            <person name="Beisel K.W."/>
            <person name="Bersano T."/>
            <person name="Bono H."/>
            <person name="Chalk A.M."/>
            <person name="Chiu K.P."/>
            <person name="Choudhary V."/>
            <person name="Christoffels A."/>
            <person name="Clutterbuck D.R."/>
            <person name="Crowe M.L."/>
            <person name="Dalla E."/>
            <person name="Dalrymple B.P."/>
            <person name="de Bono B."/>
            <person name="Della Gatta G."/>
            <person name="di Bernardo D."/>
            <person name="Down T."/>
            <person name="Engstrom P."/>
            <person name="Fagiolini M."/>
            <person name="Faulkner G."/>
            <person name="Fletcher C.F."/>
            <person name="Fukushima T."/>
            <person name="Furuno M."/>
            <person name="Futaki S."/>
            <person name="Gariboldi M."/>
            <person name="Georgii-Hemming P."/>
            <person name="Gingeras T.R."/>
            <person name="Gojobori T."/>
            <person name="Green R.E."/>
            <person name="Gustincich S."/>
            <person name="Harbers M."/>
            <person name="Hayashi Y."/>
            <person name="Hensch T.K."/>
            <person name="Hirokawa N."/>
            <person name="Hill D."/>
            <person name="Huminiecki L."/>
            <person name="Iacono M."/>
            <person name="Ikeo K."/>
            <person name="Iwama A."/>
            <person name="Ishikawa T."/>
            <person name="Jakt M."/>
            <person name="Kanapin A."/>
            <person name="Katoh M."/>
            <person name="Kawasawa Y."/>
            <person name="Kelso J."/>
            <person name="Kitamura H."/>
            <person name="Kitano H."/>
            <person name="Kollias G."/>
            <person name="Krishnan S.P."/>
            <person name="Kruger A."/>
            <person name="Kummerfeld S.K."/>
            <person name="Kurochkin I.V."/>
            <person name="Lareau L.F."/>
            <person name="Lazarevic D."/>
            <person name="Lipovich L."/>
            <person name="Liu J."/>
            <person name="Liuni S."/>
            <person name="McWilliam S."/>
            <person name="Madan Babu M."/>
            <person name="Madera M."/>
            <person name="Marchionni L."/>
            <person name="Matsuda H."/>
            <person name="Matsuzawa S."/>
            <person name="Miki H."/>
            <person name="Mignone F."/>
            <person name="Miyake S."/>
            <person name="Morris K."/>
            <person name="Mottagui-Tabar S."/>
            <person name="Mulder N."/>
            <person name="Nakano N."/>
            <person name="Nakauchi H."/>
            <person name="Ng P."/>
            <person name="Nilsson R."/>
            <person name="Nishiguchi S."/>
            <person name="Nishikawa S."/>
            <person name="Nori F."/>
            <person name="Ohara O."/>
            <person name="Okazaki Y."/>
            <person name="Orlando V."/>
            <person name="Pang K.C."/>
            <person name="Pavan W.J."/>
            <person name="Pavesi G."/>
            <person name="Pesole G."/>
            <person name="Petrovsky N."/>
            <person name="Piazza S."/>
            <person name="Reed J."/>
            <person name="Reid J.F."/>
            <person name="Ring B.Z."/>
            <person name="Ringwald M."/>
            <person name="Rost B."/>
            <person name="Ruan Y."/>
            <person name="Salzberg S.L."/>
            <person name="Sandelin A."/>
            <person name="Schneider C."/>
            <person name="Schoenbach C."/>
            <person name="Sekiguchi K."/>
            <person name="Semple C.A."/>
            <person name="Seno S."/>
            <person name="Sessa L."/>
            <person name="Sheng Y."/>
            <person name="Shibata Y."/>
            <person name="Shimada H."/>
            <person name="Shimada K."/>
            <person name="Silva D."/>
            <person name="Sinclair B."/>
            <person name="Sperling S."/>
            <person name="Stupka E."/>
            <person name="Sugiura K."/>
            <person name="Sultana R."/>
            <person name="Takenaka Y."/>
            <person name="Taki K."/>
            <person name="Tammoja K."/>
            <person name="Tan S.L."/>
            <person name="Tang S."/>
            <person name="Taylor M.S."/>
            <person name="Tegner J."/>
            <person name="Teichmann S.A."/>
            <person name="Ueda H.R."/>
            <person name="van Nimwegen E."/>
            <person name="Verardo R."/>
            <person name="Wei C.L."/>
            <person name="Yagi K."/>
            <person name="Yamanishi H."/>
            <person name="Zabarovsky E."/>
            <person name="Zhu S."/>
            <person name="Zimmer A."/>
            <person name="Hide W."/>
            <person name="Bult C."/>
            <person name="Grimmond S.M."/>
            <person name="Teasdale R.D."/>
            <person name="Liu E.T."/>
            <person name="Brusic V."/>
            <person name="Quackenbush J."/>
            <person name="Wahlestedt C."/>
            <person name="Mattick J.S."/>
            <person name="Hume D.A."/>
            <person name="Kai C."/>
            <person name="Sasaki D."/>
            <person name="Tomaru Y."/>
            <person name="Fukuda S."/>
            <person name="Kanamori-Katayama M."/>
            <person name="Suzuki M."/>
            <person name="Aoki J."/>
            <person name="Arakawa T."/>
            <person name="Iida J."/>
            <person name="Imamura K."/>
            <person name="Itoh M."/>
            <person name="Kato T."/>
            <person name="Kawaji H."/>
            <person name="Kawagashira N."/>
            <person name="Kawashima T."/>
            <person name="Kojima M."/>
            <person name="Kondo S."/>
            <person name="Konno H."/>
            <person name="Nakano K."/>
            <person name="Ninomiya N."/>
            <person name="Nishio T."/>
            <person name="Okada M."/>
            <person name="Plessy C."/>
            <person name="Shibata K."/>
            <person name="Shiraki T."/>
            <person name="Suzuki S."/>
            <person name="Tagami M."/>
            <person name="Waki K."/>
            <person name="Watahiki A."/>
            <person name="Okamura-Oho Y."/>
            <person name="Suzuki H."/>
            <person name="Kawai J."/>
            <person name="Hayashizaki Y."/>
        </authorList>
    </citation>
    <scope>NUCLEOTIDE SEQUENCE [LARGE SCALE MRNA]</scope>
    <source>
        <strain>C57BL/6J</strain>
        <tissue>Embryo</tissue>
        <tissue>Embryonic stem cell</tissue>
    </source>
</reference>
<reference key="4">
    <citation type="journal article" date="2004" name="Genome Res.">
        <title>The status, quality, and expansion of the NIH full-length cDNA project: the Mammalian Gene Collection (MGC).</title>
        <authorList>
            <consortium name="The MGC Project Team"/>
        </authorList>
    </citation>
    <scope>NUCLEOTIDE SEQUENCE [LARGE SCALE MRNA]</scope>
    <source>
        <strain>FVB/N</strain>
        <tissue>Mammary tumor</tissue>
        <tissue>Salivary gland</tissue>
    </source>
</reference>
<reference key="5">
    <citation type="submission" date="2007-04" db="UniProtKB">
        <authorList>
            <person name="Lubec G."/>
            <person name="Kang S.U."/>
        </authorList>
    </citation>
    <scope>PROTEIN SEQUENCE OF 79-91; 141-150 AND 167-179</scope>
    <scope>IDENTIFICATION BY MASS SPECTROMETRY</scope>
    <source>
        <strain>C57BL/6J</strain>
        <tissue>Brain</tissue>
    </source>
</reference>
<reference key="6">
    <citation type="journal article" date="2003" name="Mol. Cell. Biol.">
        <title>Antioxidants enhance mammalian proteasome expression through the Keap1-Nrf2 signaling pathway.</title>
        <authorList>
            <person name="Kwak M.K."/>
            <person name="Wakabayashi N."/>
            <person name="Greenlaw J.L."/>
            <person name="Yamamoto M."/>
            <person name="Kensler T.W."/>
        </authorList>
    </citation>
    <scope>INDUCTION BY ANTIOXIDANTS</scope>
</reference>
<reference key="7">
    <citation type="journal article" date="2006" name="Biochem. Biophys. Res. Commun.">
        <title>Induction of 26S proteasome subunit PSMB5 by the bifunctional inducer 3-methylcholanthrene through the Nrf2-ARE, but not the AhR/Arnt-XRE, pathway.</title>
        <authorList>
            <person name="Kwak M.K."/>
            <person name="Kensler T.W."/>
        </authorList>
    </citation>
    <scope>INDUCTION BY ANTIOXIDANTS</scope>
</reference>
<reference key="8">
    <citation type="journal article" date="2006" name="J. Biol. Chem.">
        <title>Serial analysis of gene expression in mouse uterus at the implantation site.</title>
        <authorList>
            <person name="Ma X.H."/>
            <person name="Hu S.J."/>
            <person name="Ni H."/>
            <person name="Zhao Y.C."/>
            <person name="Tian Z."/>
            <person name="Liu J.L."/>
            <person name="Ren G."/>
            <person name="Liang X.H."/>
            <person name="Yu H."/>
            <person name="Wan P."/>
            <person name="Yang Z.M."/>
        </authorList>
    </citation>
    <scope>TISSUE SPECIFICITY</scope>
</reference>
<reference key="9">
    <citation type="journal article" date="2006" name="Mol. Cell. Biol.">
        <title>Proteasome activator PA200 is required for normal spermatogenesis.</title>
        <authorList>
            <person name="Khor B."/>
            <person name="Bredemeyer A.L."/>
            <person name="Huang C.-Y."/>
            <person name="Turnbull I.R."/>
            <person name="Evans R."/>
            <person name="Maggi L.B. Jr."/>
            <person name="White J.M."/>
            <person name="Walker L.M."/>
            <person name="Carnes K."/>
            <person name="Hess R.A."/>
            <person name="Sleckman B.P."/>
        </authorList>
    </citation>
    <scope>FUNCTION</scope>
</reference>
<reference key="10">
    <citation type="journal article" date="2007" name="Life Sci.">
        <title>Tissue specific increase of the catalytic subunits of the 26S proteasome by indirect antioxidant dithiolethione in mice: enhanced activity for degradation of abnormal protein.</title>
        <authorList>
            <person name="Kwak M.K."/>
            <person name="Huang B."/>
            <person name="Chang H."/>
            <person name="Kim J.A."/>
            <person name="Kensler T.W."/>
        </authorList>
    </citation>
    <scope>INDUCTION BY DITHIOLETHIONE</scope>
</reference>
<reference key="11">
    <citation type="journal article" date="2008" name="Psychiatr. Genet.">
        <title>Microarray gene expression profiling of mouse brain mRNA in a model of lithium treatment.</title>
        <authorList>
            <person name="Chetcuti A."/>
            <person name="Adams L.J."/>
            <person name="Mitchell P.B."/>
            <person name="Schofield P.R."/>
        </authorList>
    </citation>
    <scope>INDUCTION BY LITHIUM</scope>
</reference>
<reference key="12">
    <citation type="journal article" date="2009" name="Arch. Pharm. Res.">
        <title>Protection against amyloid beta cytotoxicity by sulforaphane: role of the proteasome.</title>
        <authorList>
            <person name="Park H.M."/>
            <person name="Kim J.A."/>
            <person name="Kwak M.K."/>
        </authorList>
    </citation>
    <scope>FUNCTION</scope>
</reference>
<reference key="13">
    <citation type="journal article" date="2006" name="Circ. Res.">
        <title>Mapping the murine cardiac 26S proteasome complexes.</title>
        <authorList>
            <person name="Gomes A.V."/>
            <person name="Zong C."/>
            <person name="Edmondson R.D."/>
            <person name="Li X."/>
            <person name="Stefani E."/>
            <person name="Zhang J."/>
            <person name="Jones R.C."/>
            <person name="Thyparambil S."/>
            <person name="Wang G.W."/>
            <person name="Qiao X."/>
            <person name="Bardag-Gorce F."/>
            <person name="Ping P."/>
        </authorList>
    </citation>
    <scope>IDENTIFICATION IN THE 20S PROTEASOME CORE COMPLEX</scope>
</reference>
<reference key="14">
    <citation type="journal article" date="2010" name="Cell">
        <title>A tissue-specific atlas of mouse protein phosphorylation and expression.</title>
        <authorList>
            <person name="Huttlin E.L."/>
            <person name="Jedrychowski M.P."/>
            <person name="Elias J.E."/>
            <person name="Goswami T."/>
            <person name="Rad R."/>
            <person name="Beausoleil S.A."/>
            <person name="Villen J."/>
            <person name="Haas W."/>
            <person name="Sowa M.E."/>
            <person name="Gygi S.P."/>
        </authorList>
    </citation>
    <scope>IDENTIFICATION BY MASS SPECTROMETRY [LARGE SCALE ANALYSIS]</scope>
    <source>
        <tissue>Brain</tissue>
        <tissue>Brown adipose tissue</tissue>
        <tissue>Heart</tissue>
        <tissue>Kidney</tissue>
        <tissue>Liver</tissue>
        <tissue>Lung</tissue>
        <tissue>Pancreas</tissue>
        <tissue>Spleen</tissue>
        <tissue>Testis</tissue>
    </source>
</reference>
<reference key="15">
    <citation type="journal article" date="2012" name="Cell">
        <title>Immuno- and constitutive proteasome crystal structures reveal differences in substrate and inhibitor specificity.</title>
        <authorList>
            <person name="Huber E.M."/>
            <person name="Basler M."/>
            <person name="Schwab R."/>
            <person name="Heinemeyer W."/>
            <person name="Kirk C.J."/>
            <person name="Groettrup M."/>
            <person name="Groll M."/>
        </authorList>
    </citation>
    <scope>X-RAY CRYSTALLOGRAPHY (2.90 ANGSTROMS) OF 20S IMMUNOPROTEASOME</scope>
    <scope>SUBUNIT</scope>
    <scope>FUNCTION</scope>
    <scope>TISSUE SPECIFICITY</scope>
</reference>